<dbReference type="EC" id="6.1.1.4" evidence="1"/>
<dbReference type="EMBL" id="CP000577">
    <property type="protein sequence ID" value="ABN77600.1"/>
    <property type="molecule type" value="Genomic_DNA"/>
</dbReference>
<dbReference type="RefSeq" id="WP_011841711.1">
    <property type="nucleotide sequence ID" value="NC_009049.1"/>
</dbReference>
<dbReference type="SMR" id="A3PMN4"/>
<dbReference type="KEGG" id="rsh:Rsph17029_2498"/>
<dbReference type="HOGENOM" id="CLU_004427_0_0_5"/>
<dbReference type="GO" id="GO:0005829">
    <property type="term" value="C:cytosol"/>
    <property type="evidence" value="ECO:0007669"/>
    <property type="project" value="TreeGrafter"/>
</dbReference>
<dbReference type="GO" id="GO:0002161">
    <property type="term" value="F:aminoacyl-tRNA deacylase activity"/>
    <property type="evidence" value="ECO:0007669"/>
    <property type="project" value="InterPro"/>
</dbReference>
<dbReference type="GO" id="GO:0005524">
    <property type="term" value="F:ATP binding"/>
    <property type="evidence" value="ECO:0007669"/>
    <property type="project" value="UniProtKB-UniRule"/>
</dbReference>
<dbReference type="GO" id="GO:0004823">
    <property type="term" value="F:leucine-tRNA ligase activity"/>
    <property type="evidence" value="ECO:0007669"/>
    <property type="project" value="UniProtKB-UniRule"/>
</dbReference>
<dbReference type="GO" id="GO:0006429">
    <property type="term" value="P:leucyl-tRNA aminoacylation"/>
    <property type="evidence" value="ECO:0007669"/>
    <property type="project" value="UniProtKB-UniRule"/>
</dbReference>
<dbReference type="CDD" id="cd07958">
    <property type="entry name" value="Anticodon_Ia_Leu_BEm"/>
    <property type="match status" value="1"/>
</dbReference>
<dbReference type="CDD" id="cd00812">
    <property type="entry name" value="LeuRS_core"/>
    <property type="match status" value="1"/>
</dbReference>
<dbReference type="FunFam" id="1.10.730.10:FF:000002">
    <property type="entry name" value="Leucine--tRNA ligase"/>
    <property type="match status" value="1"/>
</dbReference>
<dbReference type="FunFam" id="3.40.50.620:FF:000003">
    <property type="entry name" value="Leucine--tRNA ligase"/>
    <property type="match status" value="1"/>
</dbReference>
<dbReference type="Gene3D" id="2.20.28.290">
    <property type="match status" value="1"/>
</dbReference>
<dbReference type="Gene3D" id="3.10.20.590">
    <property type="match status" value="1"/>
</dbReference>
<dbReference type="Gene3D" id="3.40.50.620">
    <property type="entry name" value="HUPs"/>
    <property type="match status" value="2"/>
</dbReference>
<dbReference type="Gene3D" id="1.10.730.10">
    <property type="entry name" value="Isoleucyl-tRNA Synthetase, Domain 1"/>
    <property type="match status" value="2"/>
</dbReference>
<dbReference type="Gene3D" id="3.90.740.10">
    <property type="entry name" value="Valyl/Leucyl/Isoleucyl-tRNA synthetase, editing domain"/>
    <property type="match status" value="1"/>
</dbReference>
<dbReference type="HAMAP" id="MF_00049_B">
    <property type="entry name" value="Leu_tRNA_synth_B"/>
    <property type="match status" value="1"/>
</dbReference>
<dbReference type="InterPro" id="IPR001412">
    <property type="entry name" value="aa-tRNA-synth_I_CS"/>
</dbReference>
<dbReference type="InterPro" id="IPR002300">
    <property type="entry name" value="aa-tRNA-synth_Ia"/>
</dbReference>
<dbReference type="InterPro" id="IPR002302">
    <property type="entry name" value="Leu-tRNA-ligase"/>
</dbReference>
<dbReference type="InterPro" id="IPR025709">
    <property type="entry name" value="Leu_tRNA-synth_edit"/>
</dbReference>
<dbReference type="InterPro" id="IPR013155">
    <property type="entry name" value="M/V/L/I-tRNA-synth_anticd-bd"/>
</dbReference>
<dbReference type="InterPro" id="IPR015413">
    <property type="entry name" value="Methionyl/Leucyl_tRNA_Synth"/>
</dbReference>
<dbReference type="InterPro" id="IPR014729">
    <property type="entry name" value="Rossmann-like_a/b/a_fold"/>
</dbReference>
<dbReference type="InterPro" id="IPR009080">
    <property type="entry name" value="tRNAsynth_Ia_anticodon-bd"/>
</dbReference>
<dbReference type="InterPro" id="IPR009008">
    <property type="entry name" value="Val/Leu/Ile-tRNA-synth_edit"/>
</dbReference>
<dbReference type="NCBIfam" id="TIGR00396">
    <property type="entry name" value="leuS_bact"/>
    <property type="match status" value="1"/>
</dbReference>
<dbReference type="PANTHER" id="PTHR43740:SF2">
    <property type="entry name" value="LEUCINE--TRNA LIGASE, MITOCHONDRIAL"/>
    <property type="match status" value="1"/>
</dbReference>
<dbReference type="PANTHER" id="PTHR43740">
    <property type="entry name" value="LEUCYL-TRNA SYNTHETASE"/>
    <property type="match status" value="1"/>
</dbReference>
<dbReference type="Pfam" id="PF08264">
    <property type="entry name" value="Anticodon_1"/>
    <property type="match status" value="1"/>
</dbReference>
<dbReference type="Pfam" id="PF00133">
    <property type="entry name" value="tRNA-synt_1"/>
    <property type="match status" value="2"/>
</dbReference>
<dbReference type="Pfam" id="PF13603">
    <property type="entry name" value="tRNA-synt_1_2"/>
    <property type="match status" value="1"/>
</dbReference>
<dbReference type="Pfam" id="PF09334">
    <property type="entry name" value="tRNA-synt_1g"/>
    <property type="match status" value="1"/>
</dbReference>
<dbReference type="PRINTS" id="PR00985">
    <property type="entry name" value="TRNASYNTHLEU"/>
</dbReference>
<dbReference type="SUPFAM" id="SSF47323">
    <property type="entry name" value="Anticodon-binding domain of a subclass of class I aminoacyl-tRNA synthetases"/>
    <property type="match status" value="1"/>
</dbReference>
<dbReference type="SUPFAM" id="SSF52374">
    <property type="entry name" value="Nucleotidylyl transferase"/>
    <property type="match status" value="1"/>
</dbReference>
<dbReference type="SUPFAM" id="SSF50677">
    <property type="entry name" value="ValRS/IleRS/LeuRS editing domain"/>
    <property type="match status" value="1"/>
</dbReference>
<dbReference type="PROSITE" id="PS00178">
    <property type="entry name" value="AA_TRNA_LIGASE_I"/>
    <property type="match status" value="1"/>
</dbReference>
<protein>
    <recommendedName>
        <fullName evidence="1">Leucine--tRNA ligase</fullName>
        <ecNumber evidence="1">6.1.1.4</ecNumber>
    </recommendedName>
    <alternativeName>
        <fullName evidence="1">Leucyl-tRNA synthetase</fullName>
        <shortName evidence="1">LeuRS</shortName>
    </alternativeName>
</protein>
<sequence length="847" mass="94165">MSRYDPAATESRWQAAWDAAGVFTARHDPARPKYYVLEMFPYPSGRIHMGHVRNYTMGDVVARQKAAAGFSVLHPMGWDAFGMPAENAAMERGGHPKDWTYGNIADMRAQMKPLGLSIDWSREFATCDPEYYGQQQAMFIDMMEAGLVYRKNAVVNWDPVDMTVLANEQVIDGKGWRSGAPVVRRELTQWFFRISDYAGELLEALDTLKDWPEKVRLMQANWIGQSRGLQFAFSMAGAPEGFDRLEVYTTRPDTLMGASFAAISPDHPLARHLERHDAEVAEFVAECRRVGTSEEALEKAEKKGFDTGLRVRHPFDTAWELPVYIANFILMDYGTGAIFGCPAHDQRDFEFATKYGLPIRPVFLPEDTEETALAEAFVPMKSERVHYIRGFAGAEVQTGEEGVAAAIDFCESQGVGRGVTNYRLRDWGISRQRYWGCPIPVIHCETCGVVPEAKENLPVRLPDDVSFDVPGNPLDRHPTWRDCTCPKCGAKARRETDTMDTFVDSSWYYARFTAPRAATPTDAEEADYWMNVDQYIGGIEHAILHLLYSRFFARAMQKTGHLPAKAIEPFNALFTQGMVTHEIYLTRDAAGRPVYHLPEDVTDGRLADGTPVEIIPSAKMSKSKKNVVDPMNIIRQFGADTARWFVMSDSPPERDVEWTASGAEAASKHLHRVWRLADEISRADGEANAEDGALDKATARAIAEVTQGVEGFAFNKAIAKLYEFTNTLSRSGAGAEAKKRAMRTMAQLMSPMVPHLAEEVWAMLGGEGLVAQAAWPKADPALLIDDTVTLPIQVNGKRRGEITVPKEMAASEVEKLVLADEAVQRALGGAAPKKLIVVPGRIVNVVI</sequence>
<name>SYL_CERS1</name>
<organism>
    <name type="scientific">Cereibacter sphaeroides (strain ATCC 17029 / ATH 2.4.9)</name>
    <name type="common">Rhodobacter sphaeroides</name>
    <dbReference type="NCBI Taxonomy" id="349101"/>
    <lineage>
        <taxon>Bacteria</taxon>
        <taxon>Pseudomonadati</taxon>
        <taxon>Pseudomonadota</taxon>
        <taxon>Alphaproteobacteria</taxon>
        <taxon>Rhodobacterales</taxon>
        <taxon>Paracoccaceae</taxon>
        <taxon>Cereibacter</taxon>
    </lineage>
</organism>
<comment type="catalytic activity">
    <reaction evidence="1">
        <text>tRNA(Leu) + L-leucine + ATP = L-leucyl-tRNA(Leu) + AMP + diphosphate</text>
        <dbReference type="Rhea" id="RHEA:11688"/>
        <dbReference type="Rhea" id="RHEA-COMP:9613"/>
        <dbReference type="Rhea" id="RHEA-COMP:9622"/>
        <dbReference type="ChEBI" id="CHEBI:30616"/>
        <dbReference type="ChEBI" id="CHEBI:33019"/>
        <dbReference type="ChEBI" id="CHEBI:57427"/>
        <dbReference type="ChEBI" id="CHEBI:78442"/>
        <dbReference type="ChEBI" id="CHEBI:78494"/>
        <dbReference type="ChEBI" id="CHEBI:456215"/>
        <dbReference type="EC" id="6.1.1.4"/>
    </reaction>
</comment>
<comment type="subcellular location">
    <subcellularLocation>
        <location evidence="1">Cytoplasm</location>
    </subcellularLocation>
</comment>
<comment type="similarity">
    <text evidence="1">Belongs to the class-I aminoacyl-tRNA synthetase family.</text>
</comment>
<feature type="chain" id="PRO_1000009413" description="Leucine--tRNA ligase">
    <location>
        <begin position="1"/>
        <end position="847"/>
    </location>
</feature>
<feature type="short sequence motif" description="'HIGH' region">
    <location>
        <begin position="41"/>
        <end position="51"/>
    </location>
</feature>
<feature type="short sequence motif" description="'KMSKS' region">
    <location>
        <begin position="619"/>
        <end position="623"/>
    </location>
</feature>
<feature type="binding site" evidence="1">
    <location>
        <position position="622"/>
    </location>
    <ligand>
        <name>ATP</name>
        <dbReference type="ChEBI" id="CHEBI:30616"/>
    </ligand>
</feature>
<evidence type="ECO:0000255" key="1">
    <source>
        <dbReference type="HAMAP-Rule" id="MF_00049"/>
    </source>
</evidence>
<gene>
    <name evidence="1" type="primary">leuS</name>
    <name type="ordered locus">Rsph17029_2498</name>
</gene>
<reference key="1">
    <citation type="submission" date="2007-02" db="EMBL/GenBank/DDBJ databases">
        <title>Complete sequence of chromosome 1 of Rhodobacter sphaeroides ATCC 17029.</title>
        <authorList>
            <person name="Copeland A."/>
            <person name="Lucas S."/>
            <person name="Lapidus A."/>
            <person name="Barry K."/>
            <person name="Detter J.C."/>
            <person name="Glavina del Rio T."/>
            <person name="Hammon N."/>
            <person name="Israni S."/>
            <person name="Dalin E."/>
            <person name="Tice H."/>
            <person name="Pitluck S."/>
            <person name="Kiss H."/>
            <person name="Brettin T."/>
            <person name="Bruce D."/>
            <person name="Han C."/>
            <person name="Tapia R."/>
            <person name="Gilna P."/>
            <person name="Schmutz J."/>
            <person name="Larimer F."/>
            <person name="Land M."/>
            <person name="Hauser L."/>
            <person name="Kyrpides N."/>
            <person name="Mikhailova N."/>
            <person name="Richardson P."/>
            <person name="Mackenzie C."/>
            <person name="Choudhary M."/>
            <person name="Donohue T.J."/>
            <person name="Kaplan S."/>
        </authorList>
    </citation>
    <scope>NUCLEOTIDE SEQUENCE [LARGE SCALE GENOMIC DNA]</scope>
    <source>
        <strain>ATCC 17029 / ATH 2.4.9</strain>
    </source>
</reference>
<accession>A3PMN4</accession>
<keyword id="KW-0030">Aminoacyl-tRNA synthetase</keyword>
<keyword id="KW-0067">ATP-binding</keyword>
<keyword id="KW-0963">Cytoplasm</keyword>
<keyword id="KW-0436">Ligase</keyword>
<keyword id="KW-0547">Nucleotide-binding</keyword>
<keyword id="KW-0648">Protein biosynthesis</keyword>
<proteinExistence type="inferred from homology"/>